<comment type="function">
    <text>VSG forms a coat on the surface of the parasite. The trypanosome evades the immune response of the host by expressing a series of antigenically distinct VSGs from an estimated 1000 VSG genes.</text>
</comment>
<comment type="subcellular location">
    <subcellularLocation>
        <location>Cell membrane</location>
        <topology>Lipid-anchor</topology>
        <topology>GPI-anchor</topology>
    </subcellularLocation>
    <text evidence="1">A soluble form is released from ruptured cells by the action of a PI-PLC.</text>
</comment>
<organism>
    <name type="scientific">Trypanosoma brucei rhodesiense</name>
    <dbReference type="NCBI Taxonomy" id="31286"/>
    <lineage>
        <taxon>Eukaryota</taxon>
        <taxon>Discoba</taxon>
        <taxon>Euglenozoa</taxon>
        <taxon>Kinetoplastea</taxon>
        <taxon>Metakinetoplastina</taxon>
        <taxon>Trypanosomatida</taxon>
        <taxon>Trypanosomatidae</taxon>
        <taxon>Trypanosoma</taxon>
    </lineage>
</organism>
<sequence>KNTGRRPNYRECEMRDGECNAKVAKTAEPDSKTNTTGNNSFAIKTSTLLLAVLLF</sequence>
<reference key="1">
    <citation type="journal article" date="1989" name="Mol. Biochem. Parasitol.">
        <title>A gene expressed only in serum-resistant variants of Trypanosoma brucei rhodesiense.</title>
        <authorList>
            <person name="de Greef C."/>
            <person name="Imberechts H."/>
            <person name="Matthyssens G."/>
            <person name="van Meirvenne N."/>
            <person name="Hamers R."/>
        </authorList>
    </citation>
    <scope>NUCLEOTIDE SEQUENCE [MRNA]</scope>
</reference>
<protein>
    <recommendedName>
        <fullName>Variant surface glycoprotein ETAT 1.2</fullName>
    </recommendedName>
</protein>
<dbReference type="EMBL" id="J04651">
    <property type="protein sequence ID" value="AAA30287.1"/>
    <property type="molecule type" value="mRNA"/>
</dbReference>
<dbReference type="PIR" id="A45530">
    <property type="entry name" value="A45530"/>
</dbReference>
<dbReference type="GO" id="GO:0005886">
    <property type="term" value="C:plasma membrane"/>
    <property type="evidence" value="ECO:0007669"/>
    <property type="project" value="UniProtKB-SubCell"/>
</dbReference>
<dbReference type="GO" id="GO:0098552">
    <property type="term" value="C:side of membrane"/>
    <property type="evidence" value="ECO:0007669"/>
    <property type="project" value="UniProtKB-KW"/>
</dbReference>
<dbReference type="InterPro" id="IPR027446">
    <property type="entry name" value="VSG_C_dom_sf"/>
</dbReference>
<dbReference type="SUPFAM" id="SSF118251">
    <property type="entry name" value="Variant surface glycoprotein MITAT 1.2, VSG 221, C-terminal domain"/>
    <property type="match status" value="1"/>
</dbReference>
<name>VSE2_TRYBR</name>
<feature type="chain" id="PRO_0000036445" description="Variant surface glycoprotein ETAT 1.2">
    <location>
        <begin position="1" status="less than"/>
        <end position="38"/>
    </location>
</feature>
<feature type="propeptide" id="PRO_0000036446" description="Removed in mature form" evidence="2">
    <location>
        <begin position="39"/>
        <end position="55"/>
    </location>
</feature>
<feature type="lipid moiety-binding region" description="GPI-anchor amidated asparagine" evidence="2">
    <location>
        <position position="38"/>
    </location>
</feature>
<feature type="glycosylation site" description="N-linked (GlcNAc...) asparagine" evidence="2">
    <location>
        <position position="34"/>
    </location>
</feature>
<feature type="non-terminal residue">
    <location>
        <position position="1"/>
    </location>
</feature>
<keyword id="KW-1003">Cell membrane</keyword>
<keyword id="KW-0325">Glycoprotein</keyword>
<keyword id="KW-0336">GPI-anchor</keyword>
<keyword id="KW-0449">Lipoprotein</keyword>
<keyword id="KW-0472">Membrane</keyword>
<keyword id="KW-0821">Trypanosomiasis</keyword>
<accession>P26335</accession>
<proteinExistence type="evidence at transcript level"/>
<evidence type="ECO:0000250" key="1"/>
<evidence type="ECO:0000255" key="2"/>